<sequence length="246" mass="28030">MYILNKFIRRTVIFFFFCYLPIASSESKKIEQPLLTQKYYGLRLGTTRVIYKEDAPSTSFWIMNEKEYPILVQTQVYNDDKSSKAPFIVTPPILKVESNARTRLKVIPTSNLFNKNEESLYWLCVKGVPPLNDNESNNKNNITTNLNVNVVTNSCIKLIYRPKTIDLTTMEIADKLKLERKGNSIVIKNPTSSYVNIANIKSGNLSFNIPNGYIEPFGYAQLPGGVHSKITLTILDDNGAEIIRDY</sequence>
<protein>
    <recommendedName>
        <fullName>Chaperone protein SefB</fullName>
    </recommendedName>
</protein>
<dbReference type="EMBL" id="L11009">
    <property type="protein sequence ID" value="AAA27220.1"/>
    <property type="molecule type" value="Genomic_DNA"/>
</dbReference>
<dbReference type="PIR" id="B40618">
    <property type="entry name" value="B40618"/>
</dbReference>
<dbReference type="RefSeq" id="WP_001676217.1">
    <property type="nucleotide sequence ID" value="NZ_WIDA01000014.1"/>
</dbReference>
<dbReference type="SMR" id="P33387"/>
<dbReference type="PATRIC" id="fig|149539.321.peg.4621"/>
<dbReference type="OMA" id="LQWLCVK"/>
<dbReference type="GO" id="GO:0030288">
    <property type="term" value="C:outer membrane-bounded periplasmic space"/>
    <property type="evidence" value="ECO:0007669"/>
    <property type="project" value="InterPro"/>
</dbReference>
<dbReference type="GO" id="GO:0071555">
    <property type="term" value="P:cell wall organization"/>
    <property type="evidence" value="ECO:0007669"/>
    <property type="project" value="InterPro"/>
</dbReference>
<dbReference type="GO" id="GO:0061077">
    <property type="term" value="P:chaperone-mediated protein folding"/>
    <property type="evidence" value="ECO:0007669"/>
    <property type="project" value="InterPro"/>
</dbReference>
<dbReference type="Gene3D" id="2.60.40.10">
    <property type="entry name" value="Immunoglobulins"/>
    <property type="match status" value="2"/>
</dbReference>
<dbReference type="InterPro" id="IPR013783">
    <property type="entry name" value="Ig-like_fold"/>
</dbReference>
<dbReference type="InterPro" id="IPR008962">
    <property type="entry name" value="PapD-like_sf"/>
</dbReference>
<dbReference type="InterPro" id="IPR050643">
    <property type="entry name" value="Periplasmic_pilus_chap"/>
</dbReference>
<dbReference type="InterPro" id="IPR036316">
    <property type="entry name" value="Pili_assmbl_chap_C_dom_sf"/>
</dbReference>
<dbReference type="InterPro" id="IPR001829">
    <property type="entry name" value="Pili_assmbl_chaperone_bac"/>
</dbReference>
<dbReference type="InterPro" id="IPR018046">
    <property type="entry name" value="Pili_assmbl_chaperone_CS"/>
</dbReference>
<dbReference type="InterPro" id="IPR016147">
    <property type="entry name" value="Pili_assmbl_chaperone_N"/>
</dbReference>
<dbReference type="NCBIfam" id="NF011773">
    <property type="entry name" value="PRK15233.1"/>
    <property type="match status" value="1"/>
</dbReference>
<dbReference type="PANTHER" id="PTHR30251:SF9">
    <property type="entry name" value="CHAPERONE PROTEIN CAF1M"/>
    <property type="match status" value="1"/>
</dbReference>
<dbReference type="PANTHER" id="PTHR30251">
    <property type="entry name" value="PILUS ASSEMBLY CHAPERONE"/>
    <property type="match status" value="1"/>
</dbReference>
<dbReference type="Pfam" id="PF00345">
    <property type="entry name" value="PapD_N"/>
    <property type="match status" value="1"/>
</dbReference>
<dbReference type="PRINTS" id="PR00969">
    <property type="entry name" value="CHAPERONPILI"/>
</dbReference>
<dbReference type="SUPFAM" id="SSF49354">
    <property type="entry name" value="PapD-like"/>
    <property type="match status" value="1"/>
</dbReference>
<dbReference type="SUPFAM" id="SSF49584">
    <property type="entry name" value="Periplasmic chaperone C-domain"/>
    <property type="match status" value="1"/>
</dbReference>
<dbReference type="PROSITE" id="PS00635">
    <property type="entry name" value="PILI_CHAPERONE"/>
    <property type="match status" value="1"/>
</dbReference>
<evidence type="ECO:0000250" key="1"/>
<evidence type="ECO:0000255" key="2"/>
<evidence type="ECO:0000305" key="3"/>
<keyword id="KW-0143">Chaperone</keyword>
<keyword id="KW-1015">Disulfide bond</keyword>
<keyword id="KW-1029">Fimbrium biogenesis</keyword>
<keyword id="KW-0393">Immunoglobulin domain</keyword>
<keyword id="KW-0574">Periplasm</keyword>
<keyword id="KW-0732">Signal</keyword>
<reference key="1">
    <citation type="journal article" date="1993" name="J. Bacteriol.">
        <title>Characterization of three fimbrial genes, sefABC, of Salmonella enteritidis.</title>
        <authorList>
            <person name="Clouthier S.C."/>
            <person name="Mueller K.-H."/>
            <person name="Doran J.L."/>
            <person name="Collinson S.K."/>
            <person name="Kay W.W."/>
        </authorList>
    </citation>
    <scope>NUCLEOTIDE SEQUENCE [GENOMIC DNA]</scope>
    <source>
        <strain>27655-3B</strain>
    </source>
</reference>
<name>SEFB_SALEN</name>
<accession>P33387</accession>
<proteinExistence type="inferred from homology"/>
<feature type="signal peptide" evidence="2">
    <location>
        <begin position="1"/>
        <end position="24"/>
    </location>
</feature>
<feature type="chain" id="PRO_0000009289" description="Chaperone protein SefB">
    <location>
        <begin position="25"/>
        <end position="246"/>
    </location>
</feature>
<feature type="disulfide bond" evidence="2">
    <location>
        <begin position="124"/>
        <end position="155"/>
    </location>
</feature>
<gene>
    <name type="primary">sefB</name>
</gene>
<comment type="function">
    <text>Required for the biogenesis of the SefA (SEF14) fimbria.</text>
</comment>
<comment type="subcellular location">
    <subcellularLocation>
        <location evidence="1">Periplasm</location>
    </subcellularLocation>
</comment>
<comment type="similarity">
    <text evidence="3">Belongs to the periplasmic pilus chaperone family.</text>
</comment>
<organism>
    <name type="scientific">Salmonella enteritidis</name>
    <dbReference type="NCBI Taxonomy" id="149539"/>
    <lineage>
        <taxon>Bacteria</taxon>
        <taxon>Pseudomonadati</taxon>
        <taxon>Pseudomonadota</taxon>
        <taxon>Gammaproteobacteria</taxon>
        <taxon>Enterobacterales</taxon>
        <taxon>Enterobacteriaceae</taxon>
        <taxon>Salmonella</taxon>
    </lineage>
</organism>